<evidence type="ECO:0000250" key="1">
    <source>
        <dbReference type="UniProtKB" id="P79073"/>
    </source>
</evidence>
<evidence type="ECO:0000269" key="2">
    <source>
    </source>
</evidence>
<evidence type="ECO:0000303" key="3">
    <source>
    </source>
</evidence>
<evidence type="ECO:0000305" key="4"/>
<sequence>MPASNSCSPPGGDHKPPPPPPSHPSPSPTPSYPPPPNNGGGYYPPPPDNTSHTPPPPSSTPPNNGGGGNDGGSGNTGGGNSDDGSDGGHSICPSGLYSSAQCCSTDVLGIADLNCKPPSRTPKDGSDFAKICSNTGSEARCCVIPVAGQALLCEDVVGAN</sequence>
<protein>
    <recommendedName>
        <fullName evidence="3">Class II hydrophobin 8</fullName>
    </recommendedName>
</protein>
<reference key="1">
    <citation type="submission" date="2016-07" db="EMBL/GenBank/DDBJ databases">
        <title>Multiple horizontal gene transfer events from other fungi enriched the ability of initially mycotrophic Trichoderma (Ascomycota) to feed on dead plant biomass.</title>
        <authorList>
            <consortium name="DOE Joint Genome Institute"/>
            <person name="Aerts A."/>
            <person name="Atanasova L."/>
            <person name="Chenthamara K."/>
            <person name="Zhang J."/>
            <person name="Grujic M."/>
            <person name="Henrissat B."/>
            <person name="Kuo A."/>
            <person name="Salamov A."/>
            <person name="Lipzen A."/>
            <person name="Labutti K."/>
            <person name="Barry K."/>
            <person name="Miao Y."/>
            <person name="Rahimi M.J."/>
            <person name="Shen Q."/>
            <person name="Grigoriev I.V."/>
            <person name="Kubicek C.P."/>
            <person name="Druzhinina I.S."/>
        </authorList>
    </citation>
    <scope>NUCLEOTIDE SEQUENCE [LARGE SCALE GENOMIC DNA]</scope>
    <source>
        <strain>ATCC 204424 / CBS 433.97 / NBRC 101777</strain>
    </source>
</reference>
<reference key="2">
    <citation type="journal article" date="2015" name="Microbiol. Res.">
        <title>Functional analysis of the class II hydrophobin gene HFB2-6 from the biocontrol agent Trichoderma asperellum ACCC30536.</title>
        <authorList>
            <person name="Huang Y."/>
            <person name="Mijiti G."/>
            <person name="Wang Z."/>
            <person name="Yu W."/>
            <person name="Fan H."/>
            <person name="Zhang R."/>
            <person name="Liu Z."/>
        </authorList>
    </citation>
    <scope>INDUCTION</scope>
</reference>
<dbReference type="EMBL" id="KZ679257">
    <property type="protein sequence ID" value="PTB44813.1"/>
    <property type="molecule type" value="Genomic_DNA"/>
</dbReference>
<dbReference type="STRING" id="1042311.A0A2T3ZJ73"/>
<dbReference type="OrthoDB" id="4500971at2759"/>
<dbReference type="Proteomes" id="UP000240493">
    <property type="component" value="Unassembled WGS sequence"/>
</dbReference>
<dbReference type="GO" id="GO:0005576">
    <property type="term" value="C:extracellular region"/>
    <property type="evidence" value="ECO:0007669"/>
    <property type="project" value="UniProtKB-KW"/>
</dbReference>
<dbReference type="CDD" id="cd23508">
    <property type="entry name" value="hydrophobin_II"/>
    <property type="match status" value="1"/>
</dbReference>
<dbReference type="Gene3D" id="3.20.120.10">
    <property type="entry name" value="Hydrophobin"/>
    <property type="match status" value="1"/>
</dbReference>
<dbReference type="InterPro" id="IPR010636">
    <property type="entry name" value="Cerato-ulmin_hydrophobin"/>
</dbReference>
<dbReference type="InterPro" id="IPR036686">
    <property type="entry name" value="Hydrophobin_sf"/>
</dbReference>
<dbReference type="PANTHER" id="PTHR42341">
    <property type="entry name" value="HYDROPHOBIN"/>
    <property type="match status" value="1"/>
</dbReference>
<dbReference type="PANTHER" id="PTHR42341:SF1">
    <property type="entry name" value="HYDROPHOBIN"/>
    <property type="match status" value="1"/>
</dbReference>
<dbReference type="Pfam" id="PF06766">
    <property type="entry name" value="Hydrophobin_2"/>
    <property type="match status" value="1"/>
</dbReference>
<dbReference type="SUPFAM" id="SSF101751">
    <property type="entry name" value="Hydrophobin II, HfbII"/>
    <property type="match status" value="1"/>
</dbReference>
<keyword id="KW-0134">Cell wall</keyword>
<keyword id="KW-1015">Disulfide bond</keyword>
<keyword id="KW-1185">Reference proteome</keyword>
<keyword id="KW-0964">Secreted</keyword>
<gene>
    <name evidence="3" type="primary">HFB2-8</name>
    <name type="ORF">M441DRAFT_130650</name>
</gene>
<proteinExistence type="evidence at transcript level"/>
<organism>
    <name type="scientific">Trichoderma asperellum (strain ATCC 204424 / CBS 433.97 / NBRC 101777)</name>
    <dbReference type="NCBI Taxonomy" id="1042311"/>
    <lineage>
        <taxon>Eukaryota</taxon>
        <taxon>Fungi</taxon>
        <taxon>Dikarya</taxon>
        <taxon>Ascomycota</taxon>
        <taxon>Pezizomycotina</taxon>
        <taxon>Sordariomycetes</taxon>
        <taxon>Hypocreomycetidae</taxon>
        <taxon>Hypocreales</taxon>
        <taxon>Hypocreaceae</taxon>
        <taxon>Trichoderma</taxon>
    </lineage>
</organism>
<comment type="function">
    <text evidence="4">Aerial growth, conidiation, and dispersal of filamentous fungi in the environment rely upon a capability of their secreting small amphipathic proteins called hydrophobins (HPBs) with low sequence identity. Class I can self-assemble into an outermost layer of rodlet bundles on aerial cell surfaces, conferring cellular hydrophobicity that supports fungal growth, development and dispersal; whereas Class II form highly ordered films at water-air interfaces through intermolecular interactions but contribute nothing to the rodlet structure.</text>
</comment>
<comment type="subunit">
    <text evidence="1">Homodimer (By similarity). Homodimers further self-assemble to form highly ordered films at water-air interfaces through intermolecular interactions (By similarity).</text>
</comment>
<comment type="subcellular location">
    <subcellularLocation>
        <location evidence="1">Secreted</location>
    </subcellularLocation>
    <subcellularLocation>
        <location evidence="1">Secreted</location>
        <location evidence="1">Cell wall</location>
    </subcellularLocation>
</comment>
<comment type="induction">
    <text evidence="2">No transcription can be detected in the presence of root and stem powder of Shanxin poplar, nor under carbon or nitrogen starvation conditions.</text>
</comment>
<comment type="miscellaneous">
    <text evidence="2">HBF2-8 is the only class II hydrophobin gene for which no expression has been detected and that does not contain a signal peptide sequence, thus it likely corresponds to a pseudogene.</text>
</comment>
<comment type="similarity">
    <text evidence="4">Belongs to the cerato-ulmin hydrophobin family.</text>
</comment>
<name>HFB28_TRIA4</name>
<feature type="chain" id="PRO_0000462489" description="Class II hydrophobin 8">
    <location>
        <begin position="1"/>
        <end position="160"/>
    </location>
</feature>
<feature type="disulfide bond" evidence="1">
    <location>
        <begin position="92"/>
        <end position="141"/>
    </location>
</feature>
<feature type="disulfide bond" evidence="1">
    <location>
        <begin position="102"/>
        <end position="132"/>
    </location>
</feature>
<feature type="disulfide bond" evidence="1">
    <location>
        <begin position="103"/>
        <end position="115"/>
    </location>
</feature>
<feature type="disulfide bond" evidence="1">
    <location>
        <begin position="142"/>
        <end position="153"/>
    </location>
</feature>
<accession>A0A2T3ZJ73</accession>